<feature type="chain" id="PRO_1000057218" description="Cobalamin biosynthesis protein CbiB">
    <location>
        <begin position="1"/>
        <end position="319"/>
    </location>
</feature>
<feature type="transmembrane region" description="Helical" evidence="1">
    <location>
        <begin position="56"/>
        <end position="76"/>
    </location>
</feature>
<feature type="transmembrane region" description="Helical" evidence="1">
    <location>
        <begin position="82"/>
        <end position="102"/>
    </location>
</feature>
<feature type="transmembrane region" description="Helical" evidence="1">
    <location>
        <begin position="153"/>
        <end position="173"/>
    </location>
</feature>
<feature type="transmembrane region" description="Helical" evidence="1">
    <location>
        <begin position="296"/>
        <end position="316"/>
    </location>
</feature>
<name>CBIB_SALPA</name>
<reference key="1">
    <citation type="journal article" date="2004" name="Nat. Genet.">
        <title>Comparison of genome degradation in Paratyphi A and Typhi, human-restricted serovars of Salmonella enterica that cause typhoid.</title>
        <authorList>
            <person name="McClelland M."/>
            <person name="Sanderson K.E."/>
            <person name="Clifton S.W."/>
            <person name="Latreille P."/>
            <person name="Porwollik S."/>
            <person name="Sabo A."/>
            <person name="Meyer R."/>
            <person name="Bieri T."/>
            <person name="Ozersky P."/>
            <person name="McLellan M."/>
            <person name="Harkins C.R."/>
            <person name="Wang C."/>
            <person name="Nguyen C."/>
            <person name="Berghoff A."/>
            <person name="Elliott G."/>
            <person name="Kohlberg S."/>
            <person name="Strong C."/>
            <person name="Du F."/>
            <person name="Carter J."/>
            <person name="Kremizki C."/>
            <person name="Layman D."/>
            <person name="Leonard S."/>
            <person name="Sun H."/>
            <person name="Fulton L."/>
            <person name="Nash W."/>
            <person name="Miner T."/>
            <person name="Minx P."/>
            <person name="Delehaunty K."/>
            <person name="Fronick C."/>
            <person name="Magrini V."/>
            <person name="Nhan M."/>
            <person name="Warren W."/>
            <person name="Florea L."/>
            <person name="Spieth J."/>
            <person name="Wilson R.K."/>
        </authorList>
    </citation>
    <scope>NUCLEOTIDE SEQUENCE [LARGE SCALE GENOMIC DNA]</scope>
    <source>
        <strain>ATCC 9150 / SARB42</strain>
    </source>
</reference>
<accession>Q5PDS9</accession>
<keyword id="KW-1003">Cell membrane</keyword>
<keyword id="KW-0169">Cobalamin biosynthesis</keyword>
<keyword id="KW-0472">Membrane</keyword>
<keyword id="KW-0812">Transmembrane</keyword>
<keyword id="KW-1133">Transmembrane helix</keyword>
<comment type="function">
    <text evidence="1">Converts cobyric acid to cobinamide by the addition of aminopropanol on the F carboxylic group. However, the true cosubstrate could be (R)-1-amino-2-propanol O-2-phosphate, leading to cobinamide phosphate.</text>
</comment>
<comment type="pathway">
    <text evidence="1">Cofactor biosynthesis; adenosylcobalamin biosynthesis.</text>
</comment>
<comment type="subcellular location">
    <subcellularLocation>
        <location evidence="1">Cell membrane</location>
        <topology evidence="1">Multi-pass membrane protein</topology>
    </subcellularLocation>
</comment>
<comment type="similarity">
    <text evidence="1">Belongs to the CobD/CbiB family.</text>
</comment>
<proteinExistence type="inferred from homology"/>
<evidence type="ECO:0000255" key="1">
    <source>
        <dbReference type="HAMAP-Rule" id="MF_00024"/>
    </source>
</evidence>
<sequence length="319" mass="35500">MTILAWCIAWVLDFIIGDPQHWPHPVRWIGRLITFVQRIVRRYCPGDKALRIGGGVMWVVVVGVTWGVAWGVLALAQRIHPWFGWSVEVWMIFTTLAGRSLARAAQEFERPLRENDLAESRIKLSWIVGRDTSQLQPAQINRAVVETVAENTVDGIIAPLFFLFLGGAPLAMAYKAVNTLDSMVGYKHEKYRAIGMVSARMDDVANYLPARLSWLLLGIAAGLCRLSDWRALRIGWRDRYNHSSPNCAWSEACVAGALGIQLGGPNNYFGERVDKPWIGDAQRGISVDDISRTIRLMWVASTLALALFIAARCGLSGVA</sequence>
<gene>
    <name evidence="1" type="primary">cbiB</name>
    <name type="ordered locus">SPA0837</name>
</gene>
<dbReference type="EMBL" id="CP000026">
    <property type="protein sequence ID" value="AAV76825.1"/>
    <property type="molecule type" value="Genomic_DNA"/>
</dbReference>
<dbReference type="RefSeq" id="WP_000153664.1">
    <property type="nucleotide sequence ID" value="NC_006511.1"/>
</dbReference>
<dbReference type="KEGG" id="spt:SPA0837"/>
<dbReference type="HOGENOM" id="CLU_054212_0_0_6"/>
<dbReference type="UniPathway" id="UPA00148"/>
<dbReference type="Proteomes" id="UP000008185">
    <property type="component" value="Chromosome"/>
</dbReference>
<dbReference type="GO" id="GO:0005886">
    <property type="term" value="C:plasma membrane"/>
    <property type="evidence" value="ECO:0007669"/>
    <property type="project" value="UniProtKB-SubCell"/>
</dbReference>
<dbReference type="GO" id="GO:0015420">
    <property type="term" value="F:ABC-type vitamin B12 transporter activity"/>
    <property type="evidence" value="ECO:0007669"/>
    <property type="project" value="UniProtKB-UniRule"/>
</dbReference>
<dbReference type="GO" id="GO:0048472">
    <property type="term" value="F:threonine-phosphate decarboxylase activity"/>
    <property type="evidence" value="ECO:0007669"/>
    <property type="project" value="InterPro"/>
</dbReference>
<dbReference type="GO" id="GO:0009236">
    <property type="term" value="P:cobalamin biosynthetic process"/>
    <property type="evidence" value="ECO:0007669"/>
    <property type="project" value="UniProtKB-UniRule"/>
</dbReference>
<dbReference type="HAMAP" id="MF_00024">
    <property type="entry name" value="CobD_CbiB"/>
    <property type="match status" value="1"/>
</dbReference>
<dbReference type="InterPro" id="IPR004485">
    <property type="entry name" value="Cobalamin_biosynth_CobD/CbiB"/>
</dbReference>
<dbReference type="NCBIfam" id="TIGR00380">
    <property type="entry name" value="cobal_cbiB"/>
    <property type="match status" value="1"/>
</dbReference>
<dbReference type="PANTHER" id="PTHR34308">
    <property type="entry name" value="COBALAMIN BIOSYNTHESIS PROTEIN CBIB"/>
    <property type="match status" value="1"/>
</dbReference>
<dbReference type="PANTHER" id="PTHR34308:SF1">
    <property type="entry name" value="COBALAMIN BIOSYNTHESIS PROTEIN CBIB"/>
    <property type="match status" value="1"/>
</dbReference>
<dbReference type="Pfam" id="PF03186">
    <property type="entry name" value="CobD_Cbib"/>
    <property type="match status" value="1"/>
</dbReference>
<protein>
    <recommendedName>
        <fullName evidence="1">Cobalamin biosynthesis protein CbiB</fullName>
    </recommendedName>
</protein>
<organism>
    <name type="scientific">Salmonella paratyphi A (strain ATCC 9150 / SARB42)</name>
    <dbReference type="NCBI Taxonomy" id="295319"/>
    <lineage>
        <taxon>Bacteria</taxon>
        <taxon>Pseudomonadati</taxon>
        <taxon>Pseudomonadota</taxon>
        <taxon>Gammaproteobacteria</taxon>
        <taxon>Enterobacterales</taxon>
        <taxon>Enterobacteriaceae</taxon>
        <taxon>Salmonella</taxon>
    </lineage>
</organism>